<evidence type="ECO:0000250" key="1">
    <source>
        <dbReference type="UniProtKB" id="P43490"/>
    </source>
</evidence>
<evidence type="ECO:0000269" key="2">
    <source>
    </source>
</evidence>
<evidence type="ECO:0000303" key="3">
    <source>
    </source>
</evidence>
<evidence type="ECO:0000305" key="4"/>
<evidence type="ECO:0000312" key="5">
    <source>
        <dbReference type="EMBL" id="CAG67856.1"/>
    </source>
</evidence>
<gene>
    <name evidence="3" type="primary">nadV</name>
    <name evidence="5" type="ordered locus">ACIAD0963</name>
</gene>
<protein>
    <recommendedName>
        <fullName evidence="3">Nicotinamide phosphoribosyltransferase</fullName>
        <shortName evidence="4">NAmPRTase</shortName>
        <shortName evidence="3">NMPRT</shortName>
        <shortName evidence="4">Nampt</shortName>
        <ecNumber evidence="2">2.4.2.12</ecNumber>
    </recommendedName>
</protein>
<keyword id="KW-0328">Glycosyltransferase</keyword>
<keyword id="KW-0662">Pyridine nucleotide biosynthesis</keyword>
<keyword id="KW-0808">Transferase</keyword>
<sequence length="505" mass="56527">MSFRINPLNAIDFYKADHRRQYPEGTEYVYANFTPRSSRLANMLHDFDDKIVFFGLQGFIQHFLIETWNEGFFNQDKATVVSHYKRRMDTSLGEGAVSVEHIEALHDLGYLPLKIKALPEGSRVNMRVPVLTVINTQAEFFWLTNYIETVLSAELWKSSTTATIAFEYKRLLTQYAVKTGASIENVVVQGHDFSSRGMSGIYDAAQSGVGHLTSFIGTDAVTAIDYAEQYYAASGVVGVSVPATEHSVMCMGSEENELETFRRLICELYPSGIVSIVSDTWDFWRVLSEFSVKLKQDILNRTPNALGLAKVVFRPDSGDPVKIICGDPDAEKDTPAYKGAVQLLWEIFGGTYTAQGYKVLHERVGLIYGDSITLQRAEAILQGLEAQGFASSNLVFGIGSYTYNYMTRDTFGFAVKATWGQVNGVGRELFKDPVTDSGTKKSAQGLLRVERSQDGFTLFDRQSKQQENQGELHTVFENGQLCLKSTLDEIRQRLAQQLESFKDSN</sequence>
<comment type="function">
    <text evidence="2">Catalyzes the condensation of nicotinamide with 5-phosphoribosyl-1-pyrophosphate to yield nicotinamide mononucleotide, an intermediate in the biosynthesis of NAD (PubMed:20926389). Functions in the nondeamidating salvage pathway for production of NAD from nicotinamide (PubMed:20926389). Displays a strict preference for nicotinamide over nicotinate substrate (PubMed:20926389).</text>
</comment>
<comment type="catalytic activity">
    <reaction evidence="2">
        <text>beta-nicotinamide D-ribonucleotide + diphosphate = 5-phospho-alpha-D-ribose 1-diphosphate + nicotinamide + H(+)</text>
        <dbReference type="Rhea" id="RHEA:16149"/>
        <dbReference type="ChEBI" id="CHEBI:14649"/>
        <dbReference type="ChEBI" id="CHEBI:15378"/>
        <dbReference type="ChEBI" id="CHEBI:17154"/>
        <dbReference type="ChEBI" id="CHEBI:33019"/>
        <dbReference type="ChEBI" id="CHEBI:58017"/>
        <dbReference type="EC" id="2.4.2.12"/>
    </reaction>
    <physiologicalReaction direction="right-to-left" evidence="2">
        <dbReference type="Rhea" id="RHEA:16151"/>
    </physiologicalReaction>
</comment>
<comment type="activity regulation">
    <text evidence="2">10-fold more active in the presence of saturating ATP.</text>
</comment>
<comment type="biophysicochemical properties">
    <kinetics>
        <KM evidence="2">0.04 mM for nicotinamide</KM>
        <KM evidence="2">30 mM for nicotinate</KM>
        <text evidence="2">kcat is 0.12 sec(-1) with nicotinamide as substrate. kcat is 0.020 sec(-1) with nicotinate as substrate.</text>
    </kinetics>
</comment>
<comment type="pathway">
    <text evidence="2">Cofactor biosynthesis; NAD(+) biosynthesis; nicotinamide D-ribonucleotide from 5-phospho-alpha-D-ribose 1-diphosphate and nicotinamide: step 1/1.</text>
</comment>
<comment type="induction">
    <text evidence="2">Repressed by the ADP-ribose-responsive repressor NrtR.</text>
</comment>
<comment type="disruption phenotype">
    <text evidence="2">The nadB-nadV double mutant can grow only in a minimal medium supplemented with niacin (nicotinamide or nicotinic acid).</text>
</comment>
<comment type="miscellaneous">
    <text evidence="2">The nondeamidating route is likely involved in recycling of endogenous nicotinamide (the product of intracellular NAD degradation).</text>
</comment>
<comment type="similarity">
    <text evidence="4">Belongs to the NAPRTase family.</text>
</comment>
<organism>
    <name type="scientific">Acinetobacter baylyi (strain ATCC 33305 / BD413 / ADP1)</name>
    <dbReference type="NCBI Taxonomy" id="62977"/>
    <lineage>
        <taxon>Bacteria</taxon>
        <taxon>Pseudomonadati</taxon>
        <taxon>Pseudomonadota</taxon>
        <taxon>Gammaproteobacteria</taxon>
        <taxon>Moraxellales</taxon>
        <taxon>Moraxellaceae</taxon>
        <taxon>Acinetobacter</taxon>
    </lineage>
</organism>
<name>NAMPT_ACIAD</name>
<accession>Q6FDK2</accession>
<reference key="1">
    <citation type="journal article" date="2004" name="Nucleic Acids Res.">
        <title>Unique features revealed by the genome sequence of Acinetobacter sp. ADP1, a versatile and naturally transformation competent bacterium.</title>
        <authorList>
            <person name="Barbe V."/>
            <person name="Vallenet D."/>
            <person name="Fonknechten N."/>
            <person name="Kreimeyer A."/>
            <person name="Oztas S."/>
            <person name="Labarre L."/>
            <person name="Cruveiller S."/>
            <person name="Robert C."/>
            <person name="Duprat S."/>
            <person name="Wincker P."/>
            <person name="Ornston L.N."/>
            <person name="Weissenbach J."/>
            <person name="Marliere P."/>
            <person name="Cohen G.N."/>
            <person name="Medigue C."/>
        </authorList>
    </citation>
    <scope>NUCLEOTIDE SEQUENCE [LARGE SCALE GENOMIC DNA]</scope>
    <source>
        <strain>ATCC 33305 / BD413 / ADP1</strain>
    </source>
</reference>
<reference key="2">
    <citation type="journal article" date="2010" name="J. Biol. Chem.">
        <title>Genomics-driven reconstruction of acinetobacter NAD metabolism: insights for antibacterial target selection.</title>
        <authorList>
            <person name="Sorci L."/>
            <person name="Blaby I."/>
            <person name="De Ingeniis J."/>
            <person name="Gerdes S."/>
            <person name="Raffaelli N."/>
            <person name="de Crecy Lagard V."/>
            <person name="Osterman A."/>
        </authorList>
    </citation>
    <scope>FUNCTION</scope>
    <scope>CATALYTIC ACTIVITY</scope>
    <scope>ACTIVITY REGULATION</scope>
    <scope>BIOPHYSICOCHEMICAL PROPERTIES</scope>
    <scope>PATHWAY</scope>
    <scope>INDUCTION</scope>
    <scope>DISRUPTION PHENOTYPE</scope>
    <source>
        <strain>ATCC 33305 / BD413 / ADP1</strain>
    </source>
</reference>
<proteinExistence type="evidence at protein level"/>
<feature type="chain" id="PRO_0000457823" description="Nicotinamide phosphoribosyltransferase">
    <location>
        <begin position="1"/>
        <end position="505"/>
    </location>
</feature>
<feature type="binding site" evidence="1">
    <location>
        <position position="196"/>
    </location>
    <ligand>
        <name>diphosphate</name>
        <dbReference type="ChEBI" id="CHEBI:33019"/>
    </ligand>
</feature>
<feature type="binding site" evidence="1">
    <location>
        <position position="219"/>
    </location>
    <ligand>
        <name>beta-nicotinamide D-ribonucleotide</name>
        <dbReference type="ChEBI" id="CHEBI:14649"/>
    </ligand>
</feature>
<feature type="binding site" evidence="1">
    <location>
        <position position="246"/>
    </location>
    <ligand>
        <name>diphosphate</name>
        <dbReference type="ChEBI" id="CHEBI:33019"/>
    </ligand>
</feature>
<feature type="binding site" evidence="1">
    <location>
        <begin position="314"/>
        <end position="316"/>
    </location>
    <ligand>
        <name>beta-nicotinamide D-ribonucleotide</name>
        <dbReference type="ChEBI" id="CHEBI:14649"/>
    </ligand>
</feature>
<feature type="binding site" evidence="1">
    <location>
        <position position="314"/>
    </location>
    <ligand>
        <name>diphosphate</name>
        <dbReference type="ChEBI" id="CHEBI:33019"/>
    </ligand>
</feature>
<feature type="binding site" evidence="1">
    <location>
        <begin position="369"/>
        <end position="370"/>
    </location>
    <ligand>
        <name>beta-nicotinamide D-ribonucleotide</name>
        <dbReference type="ChEBI" id="CHEBI:14649"/>
    </ligand>
</feature>
<feature type="binding site" evidence="1">
    <location>
        <position position="408"/>
    </location>
    <ligand>
        <name>beta-nicotinamide D-ribonucleotide</name>
        <dbReference type="ChEBI" id="CHEBI:14649"/>
    </ligand>
</feature>
<dbReference type="EC" id="2.4.2.12" evidence="2"/>
<dbReference type="EMBL" id="CR543861">
    <property type="protein sequence ID" value="CAG67856.1"/>
    <property type="molecule type" value="Genomic_DNA"/>
</dbReference>
<dbReference type="RefSeq" id="WP_004921916.1">
    <property type="nucleotide sequence ID" value="NC_005966.1"/>
</dbReference>
<dbReference type="SMR" id="Q6FDK2"/>
<dbReference type="STRING" id="202950.GCA_001485005_01394"/>
<dbReference type="GeneID" id="45233413"/>
<dbReference type="KEGG" id="aci:ACIAD0963"/>
<dbReference type="eggNOG" id="COG1488">
    <property type="taxonomic scope" value="Bacteria"/>
</dbReference>
<dbReference type="HOGENOM" id="CLU_012550_2_0_6"/>
<dbReference type="OrthoDB" id="394882at2"/>
<dbReference type="BioCyc" id="ASP62977:ACIAD_RS04440-MONOMER"/>
<dbReference type="UniPathway" id="UPA00253">
    <property type="reaction ID" value="UER00890"/>
</dbReference>
<dbReference type="Proteomes" id="UP000000430">
    <property type="component" value="Chromosome"/>
</dbReference>
<dbReference type="GO" id="GO:0047280">
    <property type="term" value="F:nicotinamide phosphoribosyltransferase activity"/>
    <property type="evidence" value="ECO:0007669"/>
    <property type="project" value="TreeGrafter"/>
</dbReference>
<dbReference type="GO" id="GO:0009435">
    <property type="term" value="P:NAD biosynthetic process"/>
    <property type="evidence" value="ECO:0007669"/>
    <property type="project" value="UniProtKB-UniPathway"/>
</dbReference>
<dbReference type="CDD" id="cd01569">
    <property type="entry name" value="PBEF_like"/>
    <property type="match status" value="1"/>
</dbReference>
<dbReference type="Gene3D" id="3.20.20.70">
    <property type="entry name" value="Aldolase class I"/>
    <property type="match status" value="1"/>
</dbReference>
<dbReference type="InterPro" id="IPR013785">
    <property type="entry name" value="Aldolase_TIM"/>
</dbReference>
<dbReference type="InterPro" id="IPR041529">
    <property type="entry name" value="DUF5598"/>
</dbReference>
<dbReference type="InterPro" id="IPR041525">
    <property type="entry name" value="N/Namide_PRibTrfase"/>
</dbReference>
<dbReference type="InterPro" id="IPR016471">
    <property type="entry name" value="Nicotinamide_PRibTrfase"/>
</dbReference>
<dbReference type="InterPro" id="IPR036068">
    <property type="entry name" value="Nicotinate_pribotase-like_C"/>
</dbReference>
<dbReference type="NCBIfam" id="NF006629">
    <property type="entry name" value="PRK09198.1"/>
    <property type="match status" value="1"/>
</dbReference>
<dbReference type="PANTHER" id="PTHR43816">
    <property type="entry name" value="NICOTINAMIDE PHOSPHORIBOSYLTRANSFERASE"/>
    <property type="match status" value="1"/>
</dbReference>
<dbReference type="PANTHER" id="PTHR43816:SF1">
    <property type="entry name" value="NICOTINAMIDE PHOSPHORIBOSYLTRANSFERASE"/>
    <property type="match status" value="1"/>
</dbReference>
<dbReference type="Pfam" id="PF18127">
    <property type="entry name" value="NAMPT_N"/>
    <property type="match status" value="1"/>
</dbReference>
<dbReference type="Pfam" id="PF04095">
    <property type="entry name" value="NAPRTase"/>
    <property type="match status" value="1"/>
</dbReference>
<dbReference type="PIRSF" id="PIRSF005943">
    <property type="entry name" value="NMPRT"/>
    <property type="match status" value="1"/>
</dbReference>
<dbReference type="SUPFAM" id="SSF51690">
    <property type="entry name" value="Nicotinate/Quinolinate PRTase C-terminal domain-like"/>
    <property type="match status" value="1"/>
</dbReference>